<evidence type="ECO:0000255" key="1">
    <source>
        <dbReference type="HAMAP-Rule" id="MF_00366"/>
    </source>
</evidence>
<protein>
    <recommendedName>
        <fullName evidence="1">DNA-directed RNA polymerase subunit omega</fullName>
        <shortName evidence="1">RNAP omega subunit</shortName>
        <ecNumber evidence="1">2.7.7.6</ecNumber>
    </recommendedName>
    <alternativeName>
        <fullName evidence="1">RNA polymerase omega subunit</fullName>
    </alternativeName>
    <alternativeName>
        <fullName evidence="1">Transcriptase subunit omega</fullName>
    </alternativeName>
</protein>
<gene>
    <name evidence="1" type="primary">rpoZ</name>
    <name type="ordered locus">SBO_3728</name>
</gene>
<feature type="chain" id="PRO_0000237504" description="DNA-directed RNA polymerase subunit omega">
    <location>
        <begin position="1"/>
        <end position="91"/>
    </location>
</feature>
<comment type="function">
    <text evidence="1">Promotes RNA polymerase assembly. Latches the N- and C-terminal regions of the beta' subunit thereby facilitating its interaction with the beta and alpha subunits.</text>
</comment>
<comment type="catalytic activity">
    <reaction evidence="1">
        <text>RNA(n) + a ribonucleoside 5'-triphosphate = RNA(n+1) + diphosphate</text>
        <dbReference type="Rhea" id="RHEA:21248"/>
        <dbReference type="Rhea" id="RHEA-COMP:14527"/>
        <dbReference type="Rhea" id="RHEA-COMP:17342"/>
        <dbReference type="ChEBI" id="CHEBI:33019"/>
        <dbReference type="ChEBI" id="CHEBI:61557"/>
        <dbReference type="ChEBI" id="CHEBI:140395"/>
        <dbReference type="EC" id="2.7.7.6"/>
    </reaction>
</comment>
<comment type="subunit">
    <text evidence="1">The RNAP catalytic core consists of 2 alpha, 1 beta, 1 beta' and 1 omega subunit. When a sigma factor is associated with the core the holoenzyme is formed, which can initiate transcription.</text>
</comment>
<comment type="similarity">
    <text evidence="1">Belongs to the RNA polymerase subunit omega family.</text>
</comment>
<keyword id="KW-0240">DNA-directed RNA polymerase</keyword>
<keyword id="KW-0548">Nucleotidyltransferase</keyword>
<keyword id="KW-0804">Transcription</keyword>
<keyword id="KW-0808">Transferase</keyword>
<dbReference type="EC" id="2.7.7.6" evidence="1"/>
<dbReference type="EMBL" id="CP000036">
    <property type="protein sequence ID" value="ABB68201.1"/>
    <property type="molecule type" value="Genomic_DNA"/>
</dbReference>
<dbReference type="RefSeq" id="WP_000135058.1">
    <property type="nucleotide sequence ID" value="NC_007613.1"/>
</dbReference>
<dbReference type="SMR" id="Q31UQ7"/>
<dbReference type="GeneID" id="98390719"/>
<dbReference type="KEGG" id="sbo:SBO_3728"/>
<dbReference type="HOGENOM" id="CLU_125406_5_3_6"/>
<dbReference type="Proteomes" id="UP000007067">
    <property type="component" value="Chromosome"/>
</dbReference>
<dbReference type="GO" id="GO:0000428">
    <property type="term" value="C:DNA-directed RNA polymerase complex"/>
    <property type="evidence" value="ECO:0007669"/>
    <property type="project" value="UniProtKB-KW"/>
</dbReference>
<dbReference type="GO" id="GO:0003677">
    <property type="term" value="F:DNA binding"/>
    <property type="evidence" value="ECO:0007669"/>
    <property type="project" value="UniProtKB-UniRule"/>
</dbReference>
<dbReference type="GO" id="GO:0003899">
    <property type="term" value="F:DNA-directed RNA polymerase activity"/>
    <property type="evidence" value="ECO:0007669"/>
    <property type="project" value="UniProtKB-UniRule"/>
</dbReference>
<dbReference type="GO" id="GO:0006351">
    <property type="term" value="P:DNA-templated transcription"/>
    <property type="evidence" value="ECO:0007669"/>
    <property type="project" value="UniProtKB-UniRule"/>
</dbReference>
<dbReference type="FunFam" id="3.90.940.10:FF:000001">
    <property type="entry name" value="DNA-directed RNA polymerase subunit omega"/>
    <property type="match status" value="1"/>
</dbReference>
<dbReference type="Gene3D" id="3.90.940.10">
    <property type="match status" value="1"/>
</dbReference>
<dbReference type="HAMAP" id="MF_00366">
    <property type="entry name" value="RNApol_bact_RpoZ"/>
    <property type="match status" value="1"/>
</dbReference>
<dbReference type="InterPro" id="IPR003716">
    <property type="entry name" value="DNA-dir_RNA_pol_omega"/>
</dbReference>
<dbReference type="InterPro" id="IPR006110">
    <property type="entry name" value="Pol_omega/Rpo6/RPB6"/>
</dbReference>
<dbReference type="InterPro" id="IPR036161">
    <property type="entry name" value="RPB6/omega-like_sf"/>
</dbReference>
<dbReference type="NCBIfam" id="TIGR00690">
    <property type="entry name" value="rpoZ"/>
    <property type="match status" value="1"/>
</dbReference>
<dbReference type="PANTHER" id="PTHR34476">
    <property type="entry name" value="DNA-DIRECTED RNA POLYMERASE SUBUNIT OMEGA"/>
    <property type="match status" value="1"/>
</dbReference>
<dbReference type="PANTHER" id="PTHR34476:SF1">
    <property type="entry name" value="DNA-DIRECTED RNA POLYMERASE SUBUNIT OMEGA"/>
    <property type="match status" value="1"/>
</dbReference>
<dbReference type="Pfam" id="PF01192">
    <property type="entry name" value="RNA_pol_Rpb6"/>
    <property type="match status" value="1"/>
</dbReference>
<dbReference type="SMART" id="SM01409">
    <property type="entry name" value="RNA_pol_Rpb6"/>
    <property type="match status" value="1"/>
</dbReference>
<dbReference type="SUPFAM" id="SSF63562">
    <property type="entry name" value="RPB6/omega subunit-like"/>
    <property type="match status" value="1"/>
</dbReference>
<organism>
    <name type="scientific">Shigella boydii serotype 4 (strain Sb227)</name>
    <dbReference type="NCBI Taxonomy" id="300268"/>
    <lineage>
        <taxon>Bacteria</taxon>
        <taxon>Pseudomonadati</taxon>
        <taxon>Pseudomonadota</taxon>
        <taxon>Gammaproteobacteria</taxon>
        <taxon>Enterobacterales</taxon>
        <taxon>Enterobacteriaceae</taxon>
        <taxon>Shigella</taxon>
    </lineage>
</organism>
<reference key="1">
    <citation type="journal article" date="2005" name="Nucleic Acids Res.">
        <title>Genome dynamics and diversity of Shigella species, the etiologic agents of bacillary dysentery.</title>
        <authorList>
            <person name="Yang F."/>
            <person name="Yang J."/>
            <person name="Zhang X."/>
            <person name="Chen L."/>
            <person name="Jiang Y."/>
            <person name="Yan Y."/>
            <person name="Tang X."/>
            <person name="Wang J."/>
            <person name="Xiong Z."/>
            <person name="Dong J."/>
            <person name="Xue Y."/>
            <person name="Zhu Y."/>
            <person name="Xu X."/>
            <person name="Sun L."/>
            <person name="Chen S."/>
            <person name="Nie H."/>
            <person name="Peng J."/>
            <person name="Xu J."/>
            <person name="Wang Y."/>
            <person name="Yuan Z."/>
            <person name="Wen Y."/>
            <person name="Yao Z."/>
            <person name="Shen Y."/>
            <person name="Qiang B."/>
            <person name="Hou Y."/>
            <person name="Yu J."/>
            <person name="Jin Q."/>
        </authorList>
    </citation>
    <scope>NUCLEOTIDE SEQUENCE [LARGE SCALE GENOMIC DNA]</scope>
    <source>
        <strain>Sb227</strain>
    </source>
</reference>
<name>RPOZ_SHIBS</name>
<accession>Q31UQ7</accession>
<proteinExistence type="inferred from homology"/>
<sequence>MARVTVQDAVEKIGNRFDLVLVAARRARQMQVGGKDPLVPEENDKTTVIALREIEEGLINNQILDVRERQEQQEQEAAELQAVTAIAEGRR</sequence>